<feature type="chain" id="PRO_0000223865" description="Type II iodothyronine deiodinase">
    <location>
        <begin position="1"/>
        <end position="269"/>
    </location>
</feature>
<feature type="topological domain" description="Lumenal" evidence="1">
    <location>
        <begin position="1"/>
        <end position="9"/>
    </location>
</feature>
<feature type="transmembrane region" description="Helical; Signal-anchor for type III membrane protein" evidence="3">
    <location>
        <begin position="10"/>
        <end position="34"/>
    </location>
</feature>
<feature type="topological domain" description="Cytoplasmic" evidence="1">
    <location>
        <begin position="35"/>
        <end position="269"/>
    </location>
</feature>
<feature type="region of interest" description="Disordered" evidence="5">
    <location>
        <begin position="83"/>
        <end position="103"/>
    </location>
</feature>
<feature type="active site" evidence="1">
    <location>
        <position position="133"/>
    </location>
</feature>
<feature type="non-standard amino acid" description="Selenocysteine" evidence="1">
    <location>
        <position position="133"/>
    </location>
</feature>
<feature type="non-standard amino acid" description="Selenocysteine" evidence="1">
    <location>
        <position position="266"/>
    </location>
</feature>
<dbReference type="EC" id="1.21.99.4" evidence="1"/>
<dbReference type="EMBL" id="AY858551">
    <property type="protein sequence ID" value="AAW51123.1"/>
    <property type="molecule type" value="mRNA"/>
</dbReference>
<dbReference type="RefSeq" id="NP_001010992.1">
    <property type="nucleotide sequence ID" value="NM_001010992.5"/>
</dbReference>
<dbReference type="FunCoup" id="Q5I3B2">
    <property type="interactions" value="1"/>
</dbReference>
<dbReference type="STRING" id="9913.ENSBTAP00000002107"/>
<dbReference type="PaxDb" id="9913-ENSBTAP00000002107"/>
<dbReference type="Ensembl" id="ENSBTAT00000135871.1">
    <property type="protein sequence ID" value="ENSBTAP00000086696.1"/>
    <property type="gene ID" value="ENSBTAG00000064181.1"/>
</dbReference>
<dbReference type="GeneID" id="494548"/>
<dbReference type="KEGG" id="bta:494548"/>
<dbReference type="CTD" id="1734"/>
<dbReference type="VEuPathDB" id="HostDB:ENSBTAG00000001605"/>
<dbReference type="eggNOG" id="ENOG502QS2F">
    <property type="taxonomic scope" value="Eukaryota"/>
</dbReference>
<dbReference type="GeneTree" id="ENSGT00940000154482"/>
<dbReference type="InParanoid" id="Q5I3B2"/>
<dbReference type="OMA" id="KSIWNSF"/>
<dbReference type="OrthoDB" id="428577at2759"/>
<dbReference type="Reactome" id="R-BTA-350864">
    <property type="pathway name" value="Regulation of thyroid hormone activity"/>
</dbReference>
<dbReference type="Proteomes" id="UP000009136">
    <property type="component" value="Chromosome 10"/>
</dbReference>
<dbReference type="Bgee" id="ENSBTAG00000001605">
    <property type="expression patterns" value="Expressed in semen and 57 other cell types or tissues"/>
</dbReference>
<dbReference type="GO" id="GO:0005789">
    <property type="term" value="C:endoplasmic reticulum membrane"/>
    <property type="evidence" value="ECO:0000250"/>
    <property type="project" value="UniProtKB"/>
</dbReference>
<dbReference type="GO" id="GO:0004800">
    <property type="term" value="F:thyroxine 5'-deiodinase activity"/>
    <property type="evidence" value="ECO:0000250"/>
    <property type="project" value="UniProtKB"/>
</dbReference>
<dbReference type="GO" id="GO:0033798">
    <property type="term" value="F:thyroxine 5-deiodinase activity"/>
    <property type="evidence" value="ECO:0007669"/>
    <property type="project" value="Ensembl"/>
</dbReference>
<dbReference type="GO" id="GO:0031625">
    <property type="term" value="F:ubiquitin protein ligase binding"/>
    <property type="evidence" value="ECO:0007669"/>
    <property type="project" value="Ensembl"/>
</dbReference>
<dbReference type="GO" id="GO:0042446">
    <property type="term" value="P:hormone biosynthetic process"/>
    <property type="evidence" value="ECO:0007669"/>
    <property type="project" value="UniProtKB-KW"/>
</dbReference>
<dbReference type="GO" id="GO:0042404">
    <property type="term" value="P:thyroid hormone catabolic process"/>
    <property type="evidence" value="ECO:0007669"/>
    <property type="project" value="Ensembl"/>
</dbReference>
<dbReference type="GO" id="GO:0042403">
    <property type="term" value="P:thyroid hormone metabolic process"/>
    <property type="evidence" value="ECO:0000250"/>
    <property type="project" value="UniProtKB"/>
</dbReference>
<dbReference type="FunFam" id="3.40.30.10:FF:000194">
    <property type="entry name" value="Iodothyronine deiodinase"/>
    <property type="match status" value="1"/>
</dbReference>
<dbReference type="Gene3D" id="3.40.30.10">
    <property type="entry name" value="Glutaredoxin"/>
    <property type="match status" value="1"/>
</dbReference>
<dbReference type="InterPro" id="IPR000643">
    <property type="entry name" value="Iodothyronine_deiodinase"/>
</dbReference>
<dbReference type="InterPro" id="IPR008261">
    <property type="entry name" value="Iodothyronine_deiodinase_AS"/>
</dbReference>
<dbReference type="InterPro" id="IPR036249">
    <property type="entry name" value="Thioredoxin-like_sf"/>
</dbReference>
<dbReference type="PANTHER" id="PTHR11781">
    <property type="entry name" value="IODOTHYRONINE DEIODINASE"/>
    <property type="match status" value="1"/>
</dbReference>
<dbReference type="PANTHER" id="PTHR11781:SF20">
    <property type="entry name" value="TYPE II IODOTHYRONINE DEIODINASE"/>
    <property type="match status" value="1"/>
</dbReference>
<dbReference type="Pfam" id="PF00837">
    <property type="entry name" value="T4_deiodinase"/>
    <property type="match status" value="1"/>
</dbReference>
<dbReference type="PIRSF" id="PIRSF001330">
    <property type="entry name" value="IOD"/>
    <property type="match status" value="1"/>
</dbReference>
<dbReference type="SUPFAM" id="SSF52833">
    <property type="entry name" value="Thioredoxin-like"/>
    <property type="match status" value="1"/>
</dbReference>
<dbReference type="PROSITE" id="PS01205">
    <property type="entry name" value="T4_DEIODINASE"/>
    <property type="match status" value="1"/>
</dbReference>
<sequence>MGILSVDLLITLQILPVFFSNCLFLALYDSVILLKHVVLLLSRSKSTRGQWRRMLTSEGMRCIWKSFLLDAYKQVKLGEDAPNSSVVHVSSPEGGDTSGNGAQEKTVDGTECHLLDFASPERPLVVNFGSATUPPFTNQLPAFSKLVEEFSSVADFLLVYIDEAHPSDGWAVPGDSSLFFEVKKHRNQEDRCAAAHQLLERFSLPPQCRVVADRMDNNANVAYGVAFERVCIVQRQKIAYLGGKGPFFYNLQEVRRWLEKNFSKRUKLD</sequence>
<comment type="function">
    <text evidence="1 2">Plays a crucial role in the metabolism of thyroid hormones (TH) and has specific roles in TH activation and inactivation by deiodination (By similarity). Catalyzes the deiodination of L-thyroxine (T4) to 3,5,3'-triiodothyronine (T3), 3,3',5'-triiodothyronine (rT3) to 3,3'-diiodothyronine (3,3'-T2) and 3',5'-diiodothyronine (3',5'-T2) to 3'-monoiodothyronine (3'-T1) via outer-ring deiodination (ORD) (By similarity). Catalyzes the phenolic ring deiodinations of 3,3',5'-triiodothyronamine and 3',5'- diiodothyronamine (By similarity).</text>
</comment>
<comment type="catalytic activity">
    <reaction evidence="4">
        <text>3,3',5-triiodo-L-thyronine + iodide + A + H(+) = L-thyroxine + AH2</text>
        <dbReference type="Rhea" id="RHEA:19745"/>
        <dbReference type="ChEBI" id="CHEBI:13193"/>
        <dbReference type="ChEBI" id="CHEBI:15378"/>
        <dbReference type="ChEBI" id="CHEBI:16382"/>
        <dbReference type="ChEBI" id="CHEBI:17499"/>
        <dbReference type="ChEBI" id="CHEBI:58448"/>
        <dbReference type="ChEBI" id="CHEBI:533015"/>
        <dbReference type="EC" id="1.21.99.4"/>
    </reaction>
    <physiologicalReaction direction="right-to-left" evidence="1">
        <dbReference type="Rhea" id="RHEA:19747"/>
    </physiologicalReaction>
</comment>
<comment type="catalytic activity">
    <reaction evidence="2">
        <text>3,3'-diiodo-L-thyronine + iodide + A + H(+) = 3,3',5'-triiodo-L-thyronine + AH2</text>
        <dbReference type="Rhea" id="RHEA:82575"/>
        <dbReference type="ChEBI" id="CHEBI:13193"/>
        <dbReference type="ChEBI" id="CHEBI:15378"/>
        <dbReference type="ChEBI" id="CHEBI:16382"/>
        <dbReference type="ChEBI" id="CHEBI:17499"/>
        <dbReference type="ChEBI" id="CHEBI:57261"/>
        <dbReference type="ChEBI" id="CHEBI:176514"/>
    </reaction>
    <physiologicalReaction direction="right-to-left" evidence="2">
        <dbReference type="Rhea" id="RHEA:82577"/>
    </physiologicalReaction>
</comment>
<comment type="catalytic activity">
    <reaction evidence="1">
        <text>3'-iodo-L-thyronine + iodide + A + H(+) = 3',5'-diiodo-L-thyronine + AH2</text>
        <dbReference type="Rhea" id="RHEA:82899"/>
        <dbReference type="ChEBI" id="CHEBI:13193"/>
        <dbReference type="ChEBI" id="CHEBI:15378"/>
        <dbReference type="ChEBI" id="CHEBI:16382"/>
        <dbReference type="ChEBI" id="CHEBI:17499"/>
        <dbReference type="ChEBI" id="CHEBI:195762"/>
        <dbReference type="ChEBI" id="CHEBI:232695"/>
    </reaction>
    <physiologicalReaction direction="right-to-left" evidence="1">
        <dbReference type="Rhea" id="RHEA:82901"/>
    </physiologicalReaction>
</comment>
<comment type="catalytic activity">
    <reaction evidence="1">
        <text>3,3'-diiodothyronamine + iodide + A + H(+) = 3,3',5'-triiodothyronamine + AH2</text>
        <dbReference type="Rhea" id="RHEA:83795"/>
        <dbReference type="ChEBI" id="CHEBI:13193"/>
        <dbReference type="ChEBI" id="CHEBI:15378"/>
        <dbReference type="ChEBI" id="CHEBI:16382"/>
        <dbReference type="ChEBI" id="CHEBI:17499"/>
        <dbReference type="ChEBI" id="CHEBI:233341"/>
        <dbReference type="ChEBI" id="CHEBI:233343"/>
    </reaction>
    <physiologicalReaction direction="right-to-left" evidence="1">
        <dbReference type="Rhea" id="RHEA:83797"/>
    </physiologicalReaction>
</comment>
<comment type="catalytic activity">
    <reaction evidence="1">
        <text>3'-iodothyronamine + iodide + A + H(+) = 3',5'-diiodothyronamine + AH2</text>
        <dbReference type="Rhea" id="RHEA:83803"/>
        <dbReference type="ChEBI" id="CHEBI:13193"/>
        <dbReference type="ChEBI" id="CHEBI:15378"/>
        <dbReference type="ChEBI" id="CHEBI:16382"/>
        <dbReference type="ChEBI" id="CHEBI:17499"/>
        <dbReference type="ChEBI" id="CHEBI:233339"/>
        <dbReference type="ChEBI" id="CHEBI:233342"/>
    </reaction>
    <physiologicalReaction direction="right-to-left" evidence="1">
        <dbReference type="Rhea" id="RHEA:83805"/>
    </physiologicalReaction>
</comment>
<comment type="subunit">
    <text evidence="1">Predominantly monomer. Can form homodimers but homodimerization is not essential for enzyme activity. Interacts with USP20 and USP33. Interacts with MARCHF6.</text>
</comment>
<comment type="subcellular location">
    <subcellularLocation>
        <location evidence="1">Endoplasmic reticulum membrane</location>
        <topology evidence="1">Single-pass type III membrane protein</topology>
    </subcellularLocation>
</comment>
<comment type="tissue specificity">
    <text evidence="6">Highly expressed in thyroid, mammary and pituitary glands, then in hypothalamus. Low levels detected in diaphragm, heart, kidney and lung.</text>
</comment>
<comment type="PTM">
    <text evidence="1">Ubiquitinated by MARCHF6, leading to its degradation by the proteasome. Deubiquitinated by USP20 and USP33 (By similarity).</text>
</comment>
<comment type="similarity">
    <text evidence="7">Belongs to the iodothyronine deiodinase family.</text>
</comment>
<proteinExistence type="evidence at transcript level"/>
<organism>
    <name type="scientific">Bos taurus</name>
    <name type="common">Bovine</name>
    <dbReference type="NCBI Taxonomy" id="9913"/>
    <lineage>
        <taxon>Eukaryota</taxon>
        <taxon>Metazoa</taxon>
        <taxon>Chordata</taxon>
        <taxon>Craniata</taxon>
        <taxon>Vertebrata</taxon>
        <taxon>Euteleostomi</taxon>
        <taxon>Mammalia</taxon>
        <taxon>Eutheria</taxon>
        <taxon>Laurasiatheria</taxon>
        <taxon>Artiodactyla</taxon>
        <taxon>Ruminantia</taxon>
        <taxon>Pecora</taxon>
        <taxon>Bovidae</taxon>
        <taxon>Bovinae</taxon>
        <taxon>Bos</taxon>
    </lineage>
</organism>
<keyword id="KW-0256">Endoplasmic reticulum</keyword>
<keyword id="KW-0472">Membrane</keyword>
<keyword id="KW-0560">Oxidoreductase</keyword>
<keyword id="KW-1185">Reference proteome</keyword>
<keyword id="KW-0712">Selenocysteine</keyword>
<keyword id="KW-0893">Thyroid hormones biosynthesis</keyword>
<keyword id="KW-0812">Transmembrane</keyword>
<keyword id="KW-1133">Transmembrane helix</keyword>
<keyword id="KW-0832">Ubl conjugation</keyword>
<protein>
    <recommendedName>
        <fullName>Type II iodothyronine deiodinase</fullName>
        <ecNumber evidence="1">1.21.99.4</ecNumber>
    </recommendedName>
    <alternativeName>
        <fullName>5DII</fullName>
    </alternativeName>
    <alternativeName>
        <fullName>DIOII</fullName>
    </alternativeName>
    <alternativeName>
        <fullName>Type 2 DI</fullName>
    </alternativeName>
    <alternativeName>
        <fullName>Type-II 5'-deiodinase</fullName>
    </alternativeName>
</protein>
<name>IOD2_BOVIN</name>
<gene>
    <name type="primary">DIO2</name>
</gene>
<evidence type="ECO:0000250" key="1">
    <source>
        <dbReference type="UniProtKB" id="Q92813"/>
    </source>
</evidence>
<evidence type="ECO:0000250" key="2">
    <source>
        <dbReference type="UniProtKB" id="Q9Z1Y9"/>
    </source>
</evidence>
<evidence type="ECO:0000255" key="3"/>
<evidence type="ECO:0000255" key="4">
    <source>
        <dbReference type="PROSITE-ProRule" id="PRU10107"/>
    </source>
</evidence>
<evidence type="ECO:0000256" key="5">
    <source>
        <dbReference type="SAM" id="MobiDB-lite"/>
    </source>
</evidence>
<evidence type="ECO:0000269" key="6">
    <source>
    </source>
</evidence>
<evidence type="ECO:0000305" key="7"/>
<reference key="1">
    <citation type="journal article" date="2005" name="Anim. Genet.">
        <title>Molecular cloning, expression and radiation hybrid mapping of the bovine deiodinase type II (DIO2) and deiodinase type III (DIO3) genes.</title>
        <authorList>
            <person name="Connor E.E."/>
            <person name="Laiakis E.C."/>
            <person name="Fernandes V.M."/>
            <person name="Williams J.L."/>
            <person name="Capuco A.V."/>
        </authorList>
    </citation>
    <scope>NUCLEOTIDE SEQUENCE [MRNA]</scope>
    <scope>TISSUE SPECIFICITY</scope>
    <source>
        <tissue>Mammary epithelium</tissue>
    </source>
</reference>
<accession>Q5I3B2</accession>